<sequence>MMSWKFGKKFKEGGFLSGKHHSSNNNSPSDTSRSTTPTPGNPHPEDAVKPPVPRSGMLKIRVTAAKGLSLPQGVSVPAPVQEALTTHPTLASRIATSPPTAIVKAAGANRDSLQRRQVWWLPYLVLEFDKNEVLVDALGGDLASPVWMYSATFDVSRISEISATVYLRTREPHAEGREKSNGEGEGEDMGNSDLCLGSIRFTPNLDSLRVTDDWVTVQGGGGSGSINVQVSFKPASGQILTIDSFELLKVIGKGSFGKVMQVRKRDTLRIYALKTIRKAHIVSRSEVTHTLAERTVLAQVNCPFIVPLKFSFQSKEKLYLVLAFINGGELFHHLQREGKFNETRSRFYSAQLLLALEHLHSFNVIYRDLKPENILLDYAGNIALCDFGLCKLNMSNSDTTNTFCGTPEYLAPELLSGHGYTKCVDWWTLGVLLYEMLTGLPPFYDENTNEMYRKILTEPLRFPDGVRSEARSLLTGLLNRDPRQRLGVNGAQDIKNHPFFAKHINFTKLWNKQIQPPFKPAVASAIDTSNFDEEFTNEVPLDSVVDDSHLSQTVQQQFEGFSWSVSPLGESVGRY</sequence>
<keyword id="KW-0067">ATP-binding</keyword>
<keyword id="KW-0418">Kinase</keyword>
<keyword id="KW-0547">Nucleotide-binding</keyword>
<keyword id="KW-0597">Phosphoprotein</keyword>
<keyword id="KW-0723">Serine/threonine-protein kinase</keyword>
<keyword id="KW-0808">Transferase</keyword>
<comment type="function">
    <text evidence="5">Probable serine/threonine-protein kinase which may act in the sphingolipid-mediated signaling pathway (PubMed:22339665). May act downstream of TORC2 (TOR complex 2) and PDK1 to regulate sphingolipid metabolism (PubMed:22339665).</text>
</comment>
<comment type="catalytic activity">
    <reaction evidence="1">
        <text>L-seryl-[protein] + ATP = O-phospho-L-seryl-[protein] + ADP + H(+)</text>
        <dbReference type="Rhea" id="RHEA:17989"/>
        <dbReference type="Rhea" id="RHEA-COMP:9863"/>
        <dbReference type="Rhea" id="RHEA-COMP:11604"/>
        <dbReference type="ChEBI" id="CHEBI:15378"/>
        <dbReference type="ChEBI" id="CHEBI:29999"/>
        <dbReference type="ChEBI" id="CHEBI:30616"/>
        <dbReference type="ChEBI" id="CHEBI:83421"/>
        <dbReference type="ChEBI" id="CHEBI:456216"/>
        <dbReference type="EC" id="2.7.11.1"/>
    </reaction>
</comment>
<comment type="catalytic activity">
    <reaction evidence="1">
        <text>L-threonyl-[protein] + ATP = O-phospho-L-threonyl-[protein] + ADP + H(+)</text>
        <dbReference type="Rhea" id="RHEA:46608"/>
        <dbReference type="Rhea" id="RHEA-COMP:11060"/>
        <dbReference type="Rhea" id="RHEA-COMP:11605"/>
        <dbReference type="ChEBI" id="CHEBI:15378"/>
        <dbReference type="ChEBI" id="CHEBI:30013"/>
        <dbReference type="ChEBI" id="CHEBI:30616"/>
        <dbReference type="ChEBI" id="CHEBI:61977"/>
        <dbReference type="ChEBI" id="CHEBI:456216"/>
        <dbReference type="EC" id="2.7.11.1"/>
    </reaction>
</comment>
<comment type="disruption phenotype">
    <text evidence="5">Decreases virulence in a mouse systemic infection model (PubMed:22339665). Sensitive to: high temperature; sirolimus; fluconazole; myriocin (phytosphingosine biosynthesis inhibitor); aureobasidin A (inositol-containing sphingolipid biosynthesis inhibitor); phytosphingosine (PubMed:22339665). Abnormal sphingolipid metabolism (PubMed:22339665).</text>
</comment>
<comment type="similarity">
    <text evidence="7">Belongs to the protein kinase superfamily. AGC Ser/Thr protein kinase family. RAC subfamily.</text>
</comment>
<evidence type="ECO:0000250" key="1">
    <source>
        <dbReference type="UniProtKB" id="Q9P7J8"/>
    </source>
</evidence>
<evidence type="ECO:0000255" key="2">
    <source>
        <dbReference type="PROSITE-ProRule" id="PRU00159"/>
    </source>
</evidence>
<evidence type="ECO:0000255" key="3">
    <source>
        <dbReference type="PROSITE-ProRule" id="PRU00618"/>
    </source>
</evidence>
<evidence type="ECO:0000256" key="4">
    <source>
        <dbReference type="SAM" id="MobiDB-lite"/>
    </source>
</evidence>
<evidence type="ECO:0000269" key="5">
    <source>
    </source>
</evidence>
<evidence type="ECO:0000303" key="6">
    <source>
    </source>
</evidence>
<evidence type="ECO:0000305" key="7"/>
<evidence type="ECO:0000312" key="8">
    <source>
        <dbReference type="EMBL" id="AFR97540.1"/>
    </source>
</evidence>
<evidence type="ECO:0000312" key="9">
    <source>
        <dbReference type="Proteomes" id="UP000010091"/>
    </source>
</evidence>
<accession>J9W0G9</accession>
<reference evidence="9" key="1">
    <citation type="journal article" date="2014" name="PLoS Genet.">
        <title>Analysis of the genome and transcriptome of Cryptococcus neoformans var. grubii reveals complex RNA expression and microevolution leading to virulence attenuation.</title>
        <authorList>
            <person name="Janbon G."/>
            <person name="Ormerod K.L."/>
            <person name="Paulet D."/>
            <person name="Byrnes E.J. III"/>
            <person name="Yadav V."/>
            <person name="Chatterjee G."/>
            <person name="Mullapudi N."/>
            <person name="Hon C.-C."/>
            <person name="Billmyre R.B."/>
            <person name="Brunel F."/>
            <person name="Bahn Y.-S."/>
            <person name="Chen W."/>
            <person name="Chen Y."/>
            <person name="Chow E.W.L."/>
            <person name="Coppee J.-Y."/>
            <person name="Floyd-Averette A."/>
            <person name="Gaillardin C."/>
            <person name="Gerik K.J."/>
            <person name="Goldberg J."/>
            <person name="Gonzalez-Hilarion S."/>
            <person name="Gujja S."/>
            <person name="Hamlin J.L."/>
            <person name="Hsueh Y.-P."/>
            <person name="Ianiri G."/>
            <person name="Jones S."/>
            <person name="Kodira C.D."/>
            <person name="Kozubowski L."/>
            <person name="Lam W."/>
            <person name="Marra M."/>
            <person name="Mesner L.D."/>
            <person name="Mieczkowski P.A."/>
            <person name="Moyrand F."/>
            <person name="Nielsen K."/>
            <person name="Proux C."/>
            <person name="Rossignol T."/>
            <person name="Schein J.E."/>
            <person name="Sun S."/>
            <person name="Wollschlaeger C."/>
            <person name="Wood I.A."/>
            <person name="Zeng Q."/>
            <person name="Neuveglise C."/>
            <person name="Newlon C.S."/>
            <person name="Perfect J.R."/>
            <person name="Lodge J.K."/>
            <person name="Idnurm A."/>
            <person name="Stajich J.E."/>
            <person name="Kronstad J.W."/>
            <person name="Sanyal K."/>
            <person name="Heitman J."/>
            <person name="Fraser J.A."/>
            <person name="Cuomo C.A."/>
            <person name="Dietrich F.S."/>
        </authorList>
    </citation>
    <scope>NUCLEOTIDE SEQUENCE [LARGE SCALE GENOMIC DNA]</scope>
    <source>
        <strain>H99 / ATCC 208821 / CBS 10515 / FGSC 9487</strain>
    </source>
</reference>
<reference evidence="7" key="2">
    <citation type="journal article" date="2012" name="Mol. Microbiol.">
        <title>Involvement of PDK1, PKC and TOR signalling pathways in basal fluconazole tolerance in Cryptococcus neoformans.</title>
        <authorList>
            <person name="Lee H."/>
            <person name="Khanal Lamichhane A."/>
            <person name="Garraffo H.M."/>
            <person name="Kwon-Chung K.J."/>
            <person name="Chang Y.C."/>
        </authorList>
    </citation>
    <scope>FUNCTION</scope>
    <scope>DISRUPTION PHENOTYPE</scope>
    <scope>MUTAGENESIS OF LYS-274; ASP-386; THR-402; SER-543 AND SER-562</scope>
</reference>
<protein>
    <recommendedName>
        <fullName evidence="7">Serine/threonine-protein kinase YPK1</fullName>
        <ecNumber evidence="1">2.7.11.1</ecNumber>
    </recommendedName>
</protein>
<dbReference type="EC" id="2.7.11.1" evidence="1"/>
<dbReference type="EMBL" id="CP003829">
    <property type="protein sequence ID" value="AFR97540.1"/>
    <property type="molecule type" value="Genomic_DNA"/>
</dbReference>
<dbReference type="RefSeq" id="XP_012052138.1">
    <property type="nucleotide sequence ID" value="XM_012196748.1"/>
</dbReference>
<dbReference type="SMR" id="J9W0G9"/>
<dbReference type="GeneID" id="23888064"/>
<dbReference type="KEGG" id="cng:CNAG_04678"/>
<dbReference type="VEuPathDB" id="FungiDB:CNAG_04678"/>
<dbReference type="HOGENOM" id="CLU_000288_120_1_1"/>
<dbReference type="OrthoDB" id="2042at5206"/>
<dbReference type="Proteomes" id="UP000010091">
    <property type="component" value="Chromosome 10"/>
</dbReference>
<dbReference type="GO" id="GO:0005524">
    <property type="term" value="F:ATP binding"/>
    <property type="evidence" value="ECO:0007669"/>
    <property type="project" value="UniProtKB-KW"/>
</dbReference>
<dbReference type="GO" id="GO:0106310">
    <property type="term" value="F:protein serine kinase activity"/>
    <property type="evidence" value="ECO:0007669"/>
    <property type="project" value="RHEA"/>
</dbReference>
<dbReference type="GO" id="GO:0004674">
    <property type="term" value="F:protein serine/threonine kinase activity"/>
    <property type="evidence" value="ECO:0007669"/>
    <property type="project" value="UniProtKB-KW"/>
</dbReference>
<dbReference type="GO" id="GO:0090153">
    <property type="term" value="P:regulation of sphingolipid biosynthetic process"/>
    <property type="evidence" value="ECO:0000315"/>
    <property type="project" value="UniProtKB"/>
</dbReference>
<dbReference type="CDD" id="cd05585">
    <property type="entry name" value="STKc_YPK1_like"/>
    <property type="match status" value="1"/>
</dbReference>
<dbReference type="CDD" id="cd11651">
    <property type="entry name" value="YPK1_N_like"/>
    <property type="match status" value="1"/>
</dbReference>
<dbReference type="FunFam" id="1.10.510.10:FF:000008">
    <property type="entry name" value="Non-specific serine/threonine protein kinase"/>
    <property type="match status" value="1"/>
</dbReference>
<dbReference type="FunFam" id="3.30.200.20:FF:000048">
    <property type="entry name" value="Non-specific serine/threonine protein kinase"/>
    <property type="match status" value="1"/>
</dbReference>
<dbReference type="Gene3D" id="3.30.200.20">
    <property type="entry name" value="Phosphorylase Kinase, domain 1"/>
    <property type="match status" value="1"/>
</dbReference>
<dbReference type="Gene3D" id="1.10.510.10">
    <property type="entry name" value="Transferase(Phosphotransferase) domain 1"/>
    <property type="match status" value="1"/>
</dbReference>
<dbReference type="InterPro" id="IPR000961">
    <property type="entry name" value="AGC-kinase_C"/>
</dbReference>
<dbReference type="InterPro" id="IPR011009">
    <property type="entry name" value="Kinase-like_dom_sf"/>
</dbReference>
<dbReference type="InterPro" id="IPR017892">
    <property type="entry name" value="Pkinase_C"/>
</dbReference>
<dbReference type="InterPro" id="IPR000719">
    <property type="entry name" value="Prot_kinase_dom"/>
</dbReference>
<dbReference type="InterPro" id="IPR017441">
    <property type="entry name" value="Protein_kinase_ATP_BS"/>
</dbReference>
<dbReference type="InterPro" id="IPR008271">
    <property type="entry name" value="Ser/Thr_kinase_AS"/>
</dbReference>
<dbReference type="PANTHER" id="PTHR24351">
    <property type="entry name" value="RIBOSOMAL PROTEIN S6 KINASE"/>
    <property type="match status" value="1"/>
</dbReference>
<dbReference type="Pfam" id="PF00069">
    <property type="entry name" value="Pkinase"/>
    <property type="match status" value="1"/>
</dbReference>
<dbReference type="Pfam" id="PF00433">
    <property type="entry name" value="Pkinase_C"/>
    <property type="match status" value="1"/>
</dbReference>
<dbReference type="SMART" id="SM00133">
    <property type="entry name" value="S_TK_X"/>
    <property type="match status" value="1"/>
</dbReference>
<dbReference type="SMART" id="SM00220">
    <property type="entry name" value="S_TKc"/>
    <property type="match status" value="1"/>
</dbReference>
<dbReference type="SUPFAM" id="SSF56112">
    <property type="entry name" value="Protein kinase-like (PK-like)"/>
    <property type="match status" value="1"/>
</dbReference>
<dbReference type="PROSITE" id="PS51285">
    <property type="entry name" value="AGC_KINASE_CTER"/>
    <property type="match status" value="1"/>
</dbReference>
<dbReference type="PROSITE" id="PS00107">
    <property type="entry name" value="PROTEIN_KINASE_ATP"/>
    <property type="match status" value="1"/>
</dbReference>
<dbReference type="PROSITE" id="PS50011">
    <property type="entry name" value="PROTEIN_KINASE_DOM"/>
    <property type="match status" value="1"/>
</dbReference>
<dbReference type="PROSITE" id="PS00108">
    <property type="entry name" value="PROTEIN_KINASE_ST"/>
    <property type="match status" value="1"/>
</dbReference>
<gene>
    <name evidence="6" type="primary">YPK1</name>
    <name evidence="8" type="ORF">CNAG_04678</name>
</gene>
<organism evidence="9">
    <name type="scientific">Cryptococcus neoformans var. grubii serotype A (strain H99 / ATCC 208821 / CBS 10515 / FGSC 9487)</name>
    <name type="common">Filobasidiella neoformans var. grubii</name>
    <dbReference type="NCBI Taxonomy" id="235443"/>
    <lineage>
        <taxon>Eukaryota</taxon>
        <taxon>Fungi</taxon>
        <taxon>Dikarya</taxon>
        <taxon>Basidiomycota</taxon>
        <taxon>Agaricomycotina</taxon>
        <taxon>Tremellomycetes</taxon>
        <taxon>Tremellales</taxon>
        <taxon>Cryptococcaceae</taxon>
        <taxon>Cryptococcus</taxon>
        <taxon>Cryptococcus neoformans species complex</taxon>
    </lineage>
</organism>
<name>YPK1_CRYNH</name>
<feature type="chain" id="PRO_0000451208" description="Serine/threonine-protein kinase YPK1">
    <location>
        <begin position="1"/>
        <end position="575"/>
    </location>
</feature>
<feature type="domain" description="Protein kinase" evidence="2">
    <location>
        <begin position="245"/>
        <end position="500"/>
    </location>
</feature>
<feature type="domain" description="AGC-kinase C-terminal" evidence="3">
    <location>
        <begin position="502"/>
        <end position="573"/>
    </location>
</feature>
<feature type="region of interest" description="Disordered" evidence="4">
    <location>
        <begin position="1"/>
        <end position="53"/>
    </location>
</feature>
<feature type="compositionally biased region" description="Low complexity" evidence="4">
    <location>
        <begin position="23"/>
        <end position="38"/>
    </location>
</feature>
<feature type="active site" description="Proton acceptor" evidence="2">
    <location>
        <position position="368"/>
    </location>
</feature>
<feature type="binding site" evidence="2">
    <location>
        <begin position="251"/>
        <end position="259"/>
    </location>
    <ligand>
        <name>ATP</name>
        <dbReference type="ChEBI" id="CHEBI:30616"/>
    </ligand>
</feature>
<feature type="binding site" evidence="2">
    <location>
        <position position="274"/>
    </location>
    <ligand>
        <name>ATP</name>
        <dbReference type="ChEBI" id="CHEBI:30616"/>
    </ligand>
</feature>
<feature type="modified residue" description="Phosphoserine" evidence="3">
    <location>
        <position position="543"/>
    </location>
</feature>
<feature type="modified residue" description="Phosphoserine" evidence="3">
    <location>
        <position position="562"/>
    </location>
</feature>
<feature type="mutagenesis site" description="Sensitive to fluconazole (cell wall stress inducer)." evidence="5">
    <original>K</original>
    <variation>A</variation>
    <location>
        <position position="274"/>
    </location>
</feature>
<feature type="mutagenesis site" description="Sensitive to fluconazole (cell wall stress inducer)." evidence="5">
    <original>D</original>
    <variation>A</variation>
    <location>
        <position position="386"/>
    </location>
</feature>
<feature type="mutagenesis site" description="Decreases YPK1 protein level, sensitive to fluconazole (cell wall stress inducer)." evidence="5">
    <original>T</original>
    <variation>A</variation>
    <location>
        <position position="402"/>
    </location>
</feature>
<feature type="mutagenesis site" description="Sensitive to fluconazole (cell wall stress inducer)." evidence="5">
    <original>S</original>
    <variation>A</variation>
    <location>
        <position position="543"/>
    </location>
</feature>
<feature type="mutagenesis site" description="Decreases YPK1 protein level." evidence="5">
    <original>S</original>
    <variation>A</variation>
    <location>
        <position position="562"/>
    </location>
</feature>
<proteinExistence type="evidence at protein level"/>